<organism>
    <name type="scientific">Amoebophilus asiaticus (strain 5a2)</name>
    <dbReference type="NCBI Taxonomy" id="452471"/>
    <lineage>
        <taxon>Bacteria</taxon>
        <taxon>Pseudomonadati</taxon>
        <taxon>Bacteroidota</taxon>
        <taxon>Cytophagia</taxon>
        <taxon>Cytophagales</taxon>
        <taxon>Amoebophilaceae</taxon>
        <taxon>Candidatus Amoebophilus</taxon>
    </lineage>
</organism>
<proteinExistence type="inferred from homology"/>
<evidence type="ECO:0000255" key="1">
    <source>
        <dbReference type="HAMAP-Rule" id="MF_02006"/>
    </source>
</evidence>
<gene>
    <name evidence="1" type="primary">tyrS</name>
    <name type="ordered locus">Aasi_0587</name>
</gene>
<keyword id="KW-0030">Aminoacyl-tRNA synthetase</keyword>
<keyword id="KW-0067">ATP-binding</keyword>
<keyword id="KW-0963">Cytoplasm</keyword>
<keyword id="KW-0436">Ligase</keyword>
<keyword id="KW-0547">Nucleotide-binding</keyword>
<keyword id="KW-0648">Protein biosynthesis</keyword>
<keyword id="KW-1185">Reference proteome</keyword>
<keyword id="KW-0694">RNA-binding</keyword>
<sequence length="427" mass="48823">MYDFIANLRWRGMIHDITPGLEAQLQKEMITGYIGFDPTAPSLHVGNLATIMLLKHFQLAGHKPIAVVGGATGMIGDPSFKSTERKFLSEEELLHNQSCIMKQLKCFLDFSSSANTAELLNNIDWFKDFGFLRFLREVGKHISINYMMAKESVKRRLEDGISFTEFSYQLLQGYDFYYLYNTKGVKLQMGGADQWGNLTTGIELIRRKTGEEAFALTAPLITKADGTKFGKSEQGNIWLDSTMTSPYEFYQFWLNCTDEDACRLIKVFTLLSKEEIDNLIELHVQAPHQRILQKQIAKELTIRVHSETDYMQARKTSELLFGHATAEDLWELSEKDFKVIFKSIPEVHITLTQLTEAEHMLDLVASTGFGIMFNSKGEVRRAIQEGSLSVNKEKITDPLQKPNLKLLQDKYLLVQRGKKHHYLIKVS</sequence>
<name>SYY_AMOA5</name>
<dbReference type="EC" id="6.1.1.1" evidence="1"/>
<dbReference type="EMBL" id="CP001102">
    <property type="protein sequence ID" value="ACE05988.1"/>
    <property type="molecule type" value="Genomic_DNA"/>
</dbReference>
<dbReference type="RefSeq" id="WP_012472754.1">
    <property type="nucleotide sequence ID" value="NC_010830.1"/>
</dbReference>
<dbReference type="SMR" id="B3ERY6"/>
<dbReference type="STRING" id="452471.Aasi_0587"/>
<dbReference type="KEGG" id="aas:Aasi_0587"/>
<dbReference type="eggNOG" id="COG0162">
    <property type="taxonomic scope" value="Bacteria"/>
</dbReference>
<dbReference type="HOGENOM" id="CLU_024003_0_3_10"/>
<dbReference type="OrthoDB" id="9804243at2"/>
<dbReference type="Proteomes" id="UP000001227">
    <property type="component" value="Chromosome"/>
</dbReference>
<dbReference type="GO" id="GO:0005829">
    <property type="term" value="C:cytosol"/>
    <property type="evidence" value="ECO:0007669"/>
    <property type="project" value="TreeGrafter"/>
</dbReference>
<dbReference type="GO" id="GO:0005524">
    <property type="term" value="F:ATP binding"/>
    <property type="evidence" value="ECO:0007669"/>
    <property type="project" value="UniProtKB-UniRule"/>
</dbReference>
<dbReference type="GO" id="GO:0003723">
    <property type="term" value="F:RNA binding"/>
    <property type="evidence" value="ECO:0007669"/>
    <property type="project" value="UniProtKB-KW"/>
</dbReference>
<dbReference type="GO" id="GO:0004831">
    <property type="term" value="F:tyrosine-tRNA ligase activity"/>
    <property type="evidence" value="ECO:0007669"/>
    <property type="project" value="UniProtKB-UniRule"/>
</dbReference>
<dbReference type="GO" id="GO:0006437">
    <property type="term" value="P:tyrosyl-tRNA aminoacylation"/>
    <property type="evidence" value="ECO:0007669"/>
    <property type="project" value="UniProtKB-UniRule"/>
</dbReference>
<dbReference type="CDD" id="cd00805">
    <property type="entry name" value="TyrRS_core"/>
    <property type="match status" value="1"/>
</dbReference>
<dbReference type="FunFam" id="1.10.240.10:FF:000001">
    <property type="entry name" value="Tyrosine--tRNA ligase"/>
    <property type="match status" value="1"/>
</dbReference>
<dbReference type="FunFam" id="3.40.50.620:FF:000008">
    <property type="entry name" value="Tyrosine--tRNA ligase"/>
    <property type="match status" value="1"/>
</dbReference>
<dbReference type="Gene3D" id="3.40.50.620">
    <property type="entry name" value="HUPs"/>
    <property type="match status" value="1"/>
</dbReference>
<dbReference type="Gene3D" id="3.10.290.10">
    <property type="entry name" value="RNA-binding S4 domain"/>
    <property type="match status" value="1"/>
</dbReference>
<dbReference type="Gene3D" id="1.10.240.10">
    <property type="entry name" value="Tyrosyl-Transfer RNA Synthetase"/>
    <property type="match status" value="1"/>
</dbReference>
<dbReference type="HAMAP" id="MF_02006">
    <property type="entry name" value="Tyr_tRNA_synth_type1"/>
    <property type="match status" value="1"/>
</dbReference>
<dbReference type="InterPro" id="IPR001412">
    <property type="entry name" value="aa-tRNA-synth_I_CS"/>
</dbReference>
<dbReference type="InterPro" id="IPR002305">
    <property type="entry name" value="aa-tRNA-synth_Ic"/>
</dbReference>
<dbReference type="InterPro" id="IPR014729">
    <property type="entry name" value="Rossmann-like_a/b/a_fold"/>
</dbReference>
<dbReference type="InterPro" id="IPR036986">
    <property type="entry name" value="S4_RNA-bd_sf"/>
</dbReference>
<dbReference type="InterPro" id="IPR054608">
    <property type="entry name" value="SYY-like_C"/>
</dbReference>
<dbReference type="InterPro" id="IPR002307">
    <property type="entry name" value="Tyr-tRNA-ligase"/>
</dbReference>
<dbReference type="InterPro" id="IPR024088">
    <property type="entry name" value="Tyr-tRNA-ligase_bac-type"/>
</dbReference>
<dbReference type="InterPro" id="IPR024107">
    <property type="entry name" value="Tyr-tRNA-ligase_bac_1"/>
</dbReference>
<dbReference type="NCBIfam" id="TIGR00234">
    <property type="entry name" value="tyrS"/>
    <property type="match status" value="1"/>
</dbReference>
<dbReference type="PANTHER" id="PTHR11766:SF0">
    <property type="entry name" value="TYROSINE--TRNA LIGASE, MITOCHONDRIAL"/>
    <property type="match status" value="1"/>
</dbReference>
<dbReference type="PANTHER" id="PTHR11766">
    <property type="entry name" value="TYROSYL-TRNA SYNTHETASE"/>
    <property type="match status" value="1"/>
</dbReference>
<dbReference type="Pfam" id="PF22421">
    <property type="entry name" value="SYY_C-terminal"/>
    <property type="match status" value="1"/>
</dbReference>
<dbReference type="Pfam" id="PF00579">
    <property type="entry name" value="tRNA-synt_1b"/>
    <property type="match status" value="1"/>
</dbReference>
<dbReference type="PRINTS" id="PR01040">
    <property type="entry name" value="TRNASYNTHTYR"/>
</dbReference>
<dbReference type="SUPFAM" id="SSF55174">
    <property type="entry name" value="Alpha-L RNA-binding motif"/>
    <property type="match status" value="1"/>
</dbReference>
<dbReference type="SUPFAM" id="SSF52374">
    <property type="entry name" value="Nucleotidylyl transferase"/>
    <property type="match status" value="1"/>
</dbReference>
<dbReference type="PROSITE" id="PS00178">
    <property type="entry name" value="AA_TRNA_LIGASE_I"/>
    <property type="match status" value="1"/>
</dbReference>
<comment type="function">
    <text evidence="1">Catalyzes the attachment of tyrosine to tRNA(Tyr) in a two-step reaction: tyrosine is first activated by ATP to form Tyr-AMP and then transferred to the acceptor end of tRNA(Tyr).</text>
</comment>
<comment type="catalytic activity">
    <reaction evidence="1">
        <text>tRNA(Tyr) + L-tyrosine + ATP = L-tyrosyl-tRNA(Tyr) + AMP + diphosphate + H(+)</text>
        <dbReference type="Rhea" id="RHEA:10220"/>
        <dbReference type="Rhea" id="RHEA-COMP:9706"/>
        <dbReference type="Rhea" id="RHEA-COMP:9707"/>
        <dbReference type="ChEBI" id="CHEBI:15378"/>
        <dbReference type="ChEBI" id="CHEBI:30616"/>
        <dbReference type="ChEBI" id="CHEBI:33019"/>
        <dbReference type="ChEBI" id="CHEBI:58315"/>
        <dbReference type="ChEBI" id="CHEBI:78442"/>
        <dbReference type="ChEBI" id="CHEBI:78536"/>
        <dbReference type="ChEBI" id="CHEBI:456215"/>
        <dbReference type="EC" id="6.1.1.1"/>
    </reaction>
</comment>
<comment type="subunit">
    <text evidence="1">Homodimer.</text>
</comment>
<comment type="subcellular location">
    <subcellularLocation>
        <location evidence="1">Cytoplasm</location>
    </subcellularLocation>
</comment>
<comment type="similarity">
    <text evidence="1">Belongs to the class-I aminoacyl-tRNA synthetase family. TyrS type 1 subfamily.</text>
</comment>
<feature type="chain" id="PRO_1000216267" description="Tyrosine--tRNA ligase">
    <location>
        <begin position="1"/>
        <end position="427"/>
    </location>
</feature>
<feature type="domain" description="S4 RNA-binding" evidence="1">
    <location>
        <begin position="358"/>
        <end position="426"/>
    </location>
</feature>
<feature type="short sequence motif" description="'HIGH' region">
    <location>
        <begin position="38"/>
        <end position="47"/>
    </location>
</feature>
<feature type="short sequence motif" description="'KMSKS' region">
    <location>
        <begin position="228"/>
        <end position="232"/>
    </location>
</feature>
<feature type="binding site" evidence="1">
    <location>
        <position position="33"/>
    </location>
    <ligand>
        <name>L-tyrosine</name>
        <dbReference type="ChEBI" id="CHEBI:58315"/>
    </ligand>
</feature>
<feature type="binding site" evidence="1">
    <location>
        <position position="168"/>
    </location>
    <ligand>
        <name>L-tyrosine</name>
        <dbReference type="ChEBI" id="CHEBI:58315"/>
    </ligand>
</feature>
<feature type="binding site" evidence="1">
    <location>
        <position position="172"/>
    </location>
    <ligand>
        <name>L-tyrosine</name>
        <dbReference type="ChEBI" id="CHEBI:58315"/>
    </ligand>
</feature>
<feature type="binding site" evidence="1">
    <location>
        <position position="231"/>
    </location>
    <ligand>
        <name>ATP</name>
        <dbReference type="ChEBI" id="CHEBI:30616"/>
    </ligand>
</feature>
<protein>
    <recommendedName>
        <fullName evidence="1">Tyrosine--tRNA ligase</fullName>
        <ecNumber evidence="1">6.1.1.1</ecNumber>
    </recommendedName>
    <alternativeName>
        <fullName evidence="1">Tyrosyl-tRNA synthetase</fullName>
        <shortName evidence="1">TyrRS</shortName>
    </alternativeName>
</protein>
<accession>B3ERY6</accession>
<reference key="1">
    <citation type="journal article" date="2010" name="J. Bacteriol.">
        <title>The genome of the amoeba symbiont 'Candidatus Amoebophilus asiaticus' reveals common mechanisms for host cell interaction among amoeba-associated bacteria.</title>
        <authorList>
            <person name="Schmitz-Esser S."/>
            <person name="Tischler P."/>
            <person name="Arnold R."/>
            <person name="Montanaro J."/>
            <person name="Wagner M."/>
            <person name="Rattei T."/>
            <person name="Horn M."/>
        </authorList>
    </citation>
    <scope>NUCLEOTIDE SEQUENCE [LARGE SCALE GENOMIC DNA]</scope>
    <source>
        <strain>5a2</strain>
    </source>
</reference>